<feature type="chain" id="PRO_0000395291" description="Flagellar brake protein YcgR">
    <location>
        <begin position="1"/>
        <end position="252"/>
    </location>
</feature>
<feature type="domain" description="PilZ" evidence="1">
    <location>
        <begin position="118"/>
        <end position="236"/>
    </location>
</feature>
<sequence>MGTVSETSKEQFVKKNKLAICAILRDLQKNDTAVMVTHARGQFISRILDIQPETNQFIFDFGSVENENVLALGAEQLTIIVEPTGAKIEFTCNKLKHVEYLSLPAFSSAIPEQLYFIQRREYFRVSIPQWPAYYCSGKFPDGTQYKYTLADISLGGMGLYAMKGSEFPLQGCSVLRDAAVDLCGFGLFKLDLQFIRALDKQVVNNKGETLTVQRLSFKFLRLSPIQEKGLQRAIFELEKQQTAKARKFQEGL</sequence>
<organism>
    <name type="scientific">Yersinia pseudotuberculosis serotype I (strain IP32953)</name>
    <dbReference type="NCBI Taxonomy" id="273123"/>
    <lineage>
        <taxon>Bacteria</taxon>
        <taxon>Pseudomonadati</taxon>
        <taxon>Pseudomonadota</taxon>
        <taxon>Gammaproteobacteria</taxon>
        <taxon>Enterobacterales</taxon>
        <taxon>Yersiniaceae</taxon>
        <taxon>Yersinia</taxon>
    </lineage>
</organism>
<accession>Q66DY7</accession>
<evidence type="ECO:0000255" key="1">
    <source>
        <dbReference type="HAMAP-Rule" id="MF_01457"/>
    </source>
</evidence>
<dbReference type="EMBL" id="BX936398">
    <property type="protein sequence ID" value="CAH20146.1"/>
    <property type="molecule type" value="Genomic_DNA"/>
</dbReference>
<dbReference type="RefSeq" id="WP_011191847.1">
    <property type="nucleotide sequence ID" value="NC_006155.1"/>
</dbReference>
<dbReference type="SMR" id="Q66DY7"/>
<dbReference type="GeneID" id="49787039"/>
<dbReference type="KEGG" id="yps:YPTB0906"/>
<dbReference type="Proteomes" id="UP000001011">
    <property type="component" value="Chromosome"/>
</dbReference>
<dbReference type="GO" id="GO:0009425">
    <property type="term" value="C:bacterial-type flagellum basal body"/>
    <property type="evidence" value="ECO:0007669"/>
    <property type="project" value="UniProtKB-SubCell"/>
</dbReference>
<dbReference type="GO" id="GO:0035438">
    <property type="term" value="F:cyclic-di-GMP binding"/>
    <property type="evidence" value="ECO:0007669"/>
    <property type="project" value="UniProtKB-UniRule"/>
</dbReference>
<dbReference type="GO" id="GO:0071973">
    <property type="term" value="P:bacterial-type flagellum-dependent cell motility"/>
    <property type="evidence" value="ECO:0007669"/>
    <property type="project" value="UniProtKB-UniRule"/>
</dbReference>
<dbReference type="GO" id="GO:0071945">
    <property type="term" value="P:regulation of bacterial-type flagellum-dependent cell motility by regulation of motor speed"/>
    <property type="evidence" value="ECO:0007669"/>
    <property type="project" value="UniProtKB-UniRule"/>
</dbReference>
<dbReference type="Gene3D" id="2.30.110.10">
    <property type="entry name" value="Electron Transport, Fmn-binding Protein, Chain A"/>
    <property type="match status" value="1"/>
</dbReference>
<dbReference type="Gene3D" id="2.40.10.220">
    <property type="entry name" value="predicted glycosyltransferase like domains"/>
    <property type="match status" value="1"/>
</dbReference>
<dbReference type="HAMAP" id="MF_01457">
    <property type="entry name" value="YcgR"/>
    <property type="match status" value="1"/>
</dbReference>
<dbReference type="InterPro" id="IPR009875">
    <property type="entry name" value="PilZ_domain"/>
</dbReference>
<dbReference type="InterPro" id="IPR012349">
    <property type="entry name" value="Split_barrel_FMN-bd"/>
</dbReference>
<dbReference type="InterPro" id="IPR023787">
    <property type="entry name" value="T3SS_YcgR"/>
</dbReference>
<dbReference type="InterPro" id="IPR009926">
    <property type="entry name" value="T3SS_YcgR_PilZN"/>
</dbReference>
<dbReference type="Pfam" id="PF07238">
    <property type="entry name" value="PilZ"/>
    <property type="match status" value="1"/>
</dbReference>
<dbReference type="Pfam" id="PF07317">
    <property type="entry name" value="PilZN"/>
    <property type="match status" value="1"/>
</dbReference>
<protein>
    <recommendedName>
        <fullName evidence="1">Flagellar brake protein YcgR</fullName>
    </recommendedName>
    <alternativeName>
        <fullName evidence="1">Cyclic di-GMP binding protein YcgR</fullName>
    </alternativeName>
</protein>
<gene>
    <name evidence="1" type="primary">ycgR</name>
    <name type="ordered locus">YPTB0906</name>
</gene>
<proteinExistence type="inferred from homology"/>
<reference key="1">
    <citation type="journal article" date="2004" name="Proc. Natl. Acad. Sci. U.S.A.">
        <title>Insights into the evolution of Yersinia pestis through whole-genome comparison with Yersinia pseudotuberculosis.</title>
        <authorList>
            <person name="Chain P.S.G."/>
            <person name="Carniel E."/>
            <person name="Larimer F.W."/>
            <person name="Lamerdin J."/>
            <person name="Stoutland P.O."/>
            <person name="Regala W.M."/>
            <person name="Georgescu A.M."/>
            <person name="Vergez L.M."/>
            <person name="Land M.L."/>
            <person name="Motin V.L."/>
            <person name="Brubaker R.R."/>
            <person name="Fowler J."/>
            <person name="Hinnebusch J."/>
            <person name="Marceau M."/>
            <person name="Medigue C."/>
            <person name="Simonet M."/>
            <person name="Chenal-Francisque V."/>
            <person name="Souza B."/>
            <person name="Dacheux D."/>
            <person name="Elliott J.M."/>
            <person name="Derbise A."/>
            <person name="Hauser L.J."/>
            <person name="Garcia E."/>
        </authorList>
    </citation>
    <scope>NUCLEOTIDE SEQUENCE [LARGE SCALE GENOMIC DNA]</scope>
    <source>
        <strain>IP32953</strain>
    </source>
</reference>
<comment type="function">
    <text evidence="1">Acts as a flagellar brake, regulating swimming and swarming in a bis-(3'-5') cyclic diguanylic acid (c-di-GMP)-dependent manner. Binds 1 c-di-GMP dimer per subunit. Increasing levels of c-di-GMP lead to decreased motility.</text>
</comment>
<comment type="subunit">
    <text evidence="1">Monomer. Interacts with the flagellar basal bodies.</text>
</comment>
<comment type="subcellular location">
    <subcellularLocation>
        <location evidence="1">Bacterial flagellum basal body</location>
    </subcellularLocation>
</comment>
<comment type="similarity">
    <text evidence="1">Belongs to the YcgR family.</text>
</comment>
<name>YCGR_YERPS</name>
<keyword id="KW-0975">Bacterial flagellum</keyword>
<keyword id="KW-0973">c-di-GMP</keyword>
<keyword id="KW-0547">Nucleotide-binding</keyword>